<reference evidence="6 7" key="1">
    <citation type="journal article" date="1999" name="Mech. Dev.">
        <title>A role for the homeobox gene Xvex-1 as part of the BMP-4 ventral signaling pathway.</title>
        <authorList>
            <person name="Shapira E."/>
            <person name="Marom K."/>
            <person name="Yelin R."/>
            <person name="Levy A."/>
            <person name="Fainsod A."/>
        </authorList>
    </citation>
    <scope>NUCLEOTIDE SEQUENCE [MRNA]</scope>
    <scope>FUNCTION</scope>
    <scope>TISSUE SPECIFICITY</scope>
    <scope>DEVELOPMENTAL STAGE</scope>
    <source>
        <tissue evidence="4">Gastrula</tissue>
        <tissue evidence="4">Neurula</tissue>
    </source>
</reference>
<reference evidence="6" key="2">
    <citation type="journal article" date="2000" name="Mech. Dev.">
        <title>The Xvex-1 antimorph reveals the temporal competence for organizer formation and an early role for ventral homeobox genes.</title>
        <authorList>
            <person name="Shapira E."/>
            <person name="Marom K."/>
            <person name="Levy V."/>
            <person name="Yelin R."/>
            <person name="Fainsod A."/>
        </authorList>
    </citation>
    <scope>FUNCTION</scope>
</reference>
<evidence type="ECO:0000250" key="1">
    <source>
        <dbReference type="UniProtKB" id="Q6F2E2"/>
    </source>
</evidence>
<evidence type="ECO:0000255" key="2">
    <source>
        <dbReference type="PROSITE-ProRule" id="PRU00108"/>
    </source>
</evidence>
<evidence type="ECO:0000256" key="3">
    <source>
        <dbReference type="SAM" id="MobiDB-lite"/>
    </source>
</evidence>
<evidence type="ECO:0000269" key="4">
    <source>
    </source>
</evidence>
<evidence type="ECO:0000269" key="5">
    <source>
    </source>
</evidence>
<evidence type="ECO:0000305" key="6"/>
<evidence type="ECO:0000312" key="7">
    <source>
        <dbReference type="EMBL" id="AAD42079.1"/>
    </source>
</evidence>
<feature type="chain" id="PRO_0000279725" description="Homeobox protein vex1">
    <location>
        <begin position="1"/>
        <end position="285"/>
    </location>
</feature>
<feature type="DNA-binding region" description="Homeobox" evidence="2">
    <location>
        <begin position="131"/>
        <end position="190"/>
    </location>
</feature>
<feature type="region of interest" description="Disordered" evidence="3">
    <location>
        <begin position="30"/>
        <end position="54"/>
    </location>
</feature>
<feature type="region of interest" description="Disordered" evidence="3">
    <location>
        <begin position="69"/>
        <end position="88"/>
    </location>
</feature>
<feature type="compositionally biased region" description="Basic and acidic residues" evidence="3">
    <location>
        <begin position="69"/>
        <end position="80"/>
    </location>
</feature>
<organism>
    <name type="scientific">Xenopus laevis</name>
    <name type="common">African clawed frog</name>
    <dbReference type="NCBI Taxonomy" id="8355"/>
    <lineage>
        <taxon>Eukaryota</taxon>
        <taxon>Metazoa</taxon>
        <taxon>Chordata</taxon>
        <taxon>Craniata</taxon>
        <taxon>Vertebrata</taxon>
        <taxon>Euteleostomi</taxon>
        <taxon>Amphibia</taxon>
        <taxon>Batrachia</taxon>
        <taxon>Anura</taxon>
        <taxon>Pipoidea</taxon>
        <taxon>Pipidae</taxon>
        <taxon>Xenopodinae</taxon>
        <taxon>Xenopus</taxon>
        <taxon>Xenopus</taxon>
    </lineage>
</organism>
<name>VEX1_XENLA</name>
<comment type="function">
    <text evidence="4 5">Transcriptional repressor. Acts in a ventral signaling pathway downstream of bmp4 to antagonize the Spemann organizer and ventrally pattern the embryonic mesoderm. Represses transcription of the dorsal genes gsc and otx2.</text>
</comment>
<comment type="subcellular location">
    <subcellularLocation>
        <location evidence="6">Nucleus</location>
    </subcellularLocation>
</comment>
<comment type="tissue specificity">
    <text evidence="4">Widely expressed in the embryo prior to gastrulation. Becomes restricted to the ventral marginal zone by mid/late gastrulation. Ventral localization persists during gastrulation and neurulation in the ventral region of the closed blastopore and in the proctodeum during tail bud stages.</text>
</comment>
<comment type="developmental stage">
    <text evidence="4">Expression begins at a low level shortly after the mid-blastula transition. Expression then increases during early and mid-gastrulation.</text>
</comment>
<proteinExistence type="evidence at transcript level"/>
<protein>
    <recommendedName>
        <fullName>Homeobox protein vex1</fullName>
    </recommendedName>
    <alternativeName>
        <fullName>Homeodomain transcription factor vex-1</fullName>
    </alternativeName>
    <alternativeName>
        <fullName>Ventral homeobox protein</fullName>
    </alternativeName>
    <alternativeName>
        <fullName>Xvex-1</fullName>
    </alternativeName>
</protein>
<gene>
    <name evidence="1" type="primary">vex1</name>
    <name evidence="7" type="synonym">vex-1</name>
</gene>
<keyword id="KW-0217">Developmental protein</keyword>
<keyword id="KW-0238">DNA-binding</keyword>
<keyword id="KW-0371">Homeobox</keyword>
<keyword id="KW-0539">Nucleus</keyword>
<keyword id="KW-1185">Reference proteome</keyword>
<keyword id="KW-0804">Transcription</keyword>
<keyword id="KW-0805">Transcription regulation</keyword>
<accession>Q9W769</accession>
<dbReference type="EMBL" id="AF149307">
    <property type="protein sequence ID" value="AAD42079.1"/>
    <property type="molecule type" value="mRNA"/>
</dbReference>
<dbReference type="RefSeq" id="NP_001081954.1">
    <property type="nucleotide sequence ID" value="NM_001088485.1"/>
</dbReference>
<dbReference type="SMR" id="Q9W769"/>
<dbReference type="GeneID" id="398140"/>
<dbReference type="KEGG" id="xla:398140"/>
<dbReference type="AGR" id="Xenbase:XB-GENE-864941"/>
<dbReference type="CTD" id="398140"/>
<dbReference type="Xenbase" id="XB-GENE-864941">
    <property type="gene designation" value="ventx3.2.S"/>
</dbReference>
<dbReference type="OMA" id="SANRTCP"/>
<dbReference type="OrthoDB" id="6159439at2759"/>
<dbReference type="Proteomes" id="UP000186698">
    <property type="component" value="Chromosome 7S"/>
</dbReference>
<dbReference type="GO" id="GO:0005634">
    <property type="term" value="C:nucleus"/>
    <property type="evidence" value="ECO:0000318"/>
    <property type="project" value="GO_Central"/>
</dbReference>
<dbReference type="GO" id="GO:0000981">
    <property type="term" value="F:DNA-binding transcription factor activity, RNA polymerase II-specific"/>
    <property type="evidence" value="ECO:0000318"/>
    <property type="project" value="GO_Central"/>
</dbReference>
<dbReference type="GO" id="GO:0000978">
    <property type="term" value="F:RNA polymerase II cis-regulatory region sequence-specific DNA binding"/>
    <property type="evidence" value="ECO:0000318"/>
    <property type="project" value="GO_Central"/>
</dbReference>
<dbReference type="GO" id="GO:0030509">
    <property type="term" value="P:BMP signaling pathway"/>
    <property type="evidence" value="ECO:0000316"/>
    <property type="project" value="UniProtKB"/>
</dbReference>
<dbReference type="GO" id="GO:0030154">
    <property type="term" value="P:cell differentiation"/>
    <property type="evidence" value="ECO:0000318"/>
    <property type="project" value="GO_Central"/>
</dbReference>
<dbReference type="GO" id="GO:0048264">
    <property type="term" value="P:determination of ventral identity"/>
    <property type="evidence" value="ECO:0000315"/>
    <property type="project" value="UniProtKB"/>
</dbReference>
<dbReference type="GO" id="GO:0045892">
    <property type="term" value="P:negative regulation of DNA-templated transcription"/>
    <property type="evidence" value="ECO:0000315"/>
    <property type="project" value="UniProtKB"/>
</dbReference>
<dbReference type="GO" id="GO:0000122">
    <property type="term" value="P:negative regulation of transcription by RNA polymerase II"/>
    <property type="evidence" value="ECO:0000315"/>
    <property type="project" value="UniProtKB"/>
</dbReference>
<dbReference type="GO" id="GO:0006357">
    <property type="term" value="P:regulation of transcription by RNA polymerase II"/>
    <property type="evidence" value="ECO:0000318"/>
    <property type="project" value="GO_Central"/>
</dbReference>
<dbReference type="CDD" id="cd00086">
    <property type="entry name" value="homeodomain"/>
    <property type="match status" value="1"/>
</dbReference>
<dbReference type="FunFam" id="1.10.10.60:FF:000724">
    <property type="entry name" value="Homeobox protein vex1"/>
    <property type="match status" value="1"/>
</dbReference>
<dbReference type="Gene3D" id="1.10.10.60">
    <property type="entry name" value="Homeodomain-like"/>
    <property type="match status" value="1"/>
</dbReference>
<dbReference type="InterPro" id="IPR001356">
    <property type="entry name" value="HD"/>
</dbReference>
<dbReference type="InterPro" id="IPR020479">
    <property type="entry name" value="HD_metazoa"/>
</dbReference>
<dbReference type="InterPro" id="IPR017970">
    <property type="entry name" value="Homeobox_CS"/>
</dbReference>
<dbReference type="InterPro" id="IPR050848">
    <property type="entry name" value="Homeobox_TF"/>
</dbReference>
<dbReference type="InterPro" id="IPR009057">
    <property type="entry name" value="Homeodomain-like_sf"/>
</dbReference>
<dbReference type="PANTHER" id="PTHR24333">
    <property type="entry name" value="HOMEO BOX HB9 LIKE A-RELATED"/>
    <property type="match status" value="1"/>
</dbReference>
<dbReference type="PANTHER" id="PTHR24333:SF14">
    <property type="entry name" value="HOMEOBOX DOMAIN-CONTAINING PROTEIN"/>
    <property type="match status" value="1"/>
</dbReference>
<dbReference type="Pfam" id="PF00046">
    <property type="entry name" value="Homeodomain"/>
    <property type="match status" value="1"/>
</dbReference>
<dbReference type="PRINTS" id="PR00024">
    <property type="entry name" value="HOMEOBOX"/>
</dbReference>
<dbReference type="SMART" id="SM00389">
    <property type="entry name" value="HOX"/>
    <property type="match status" value="1"/>
</dbReference>
<dbReference type="SUPFAM" id="SSF46689">
    <property type="entry name" value="Homeodomain-like"/>
    <property type="match status" value="1"/>
</dbReference>
<dbReference type="PROSITE" id="PS00027">
    <property type="entry name" value="HOMEOBOX_1"/>
    <property type="match status" value="1"/>
</dbReference>
<dbReference type="PROSITE" id="PS50071">
    <property type="entry name" value="HOMEOBOX_2"/>
    <property type="match status" value="1"/>
</dbReference>
<sequence length="285" mass="32243">MEKRPYSVEWLSESSQRKAVYSNADLLGYKSGNPDKESNISLPSRATGPTLPSVDYREKENYCVRNVQNEERSPPVKDQLHSQPAPQELDTSRRALMVVPACERSTDQGNKVTGTTDTNKKAKPVCDEDAAARARTKFSPEQLEELERSFKENRYIGSSEKRRLSKVLKLSETQIKTWFQNRRMKFKRQTQDARVDAFFSGLYVPYYGYPDLPTPGYSVQPEFSVLAPHTMAAPSLPFGPLQSTVISPGLHPTAIPSANLGSYPYSSMLVHPMLNEPKRQRYSPY</sequence>